<sequence length="310" mass="35203">MHMNLEAFILGCGGMVPLPHRHLTSVLLRREGELFLFDAGEGTQVSLRRLSLRWKKISAIFISHTHADHITGLPGLLMLSSQVARSEPLYIIGPPRTAEYVETSRRILDMYINYEIIVKEVIEPQVVYRGKDFQVRCFCLDHTKPCMGYTLEEQDRPGSFDPRAAQDLHVPCGALWSQLQSGVAVQSAQGVTVYPEQVMGPARPGRKVSFVTDTKYLQSIAAEVRNSDFFVCEGMFEKGMEKDAAEKKHMTCVQAATIARDARVRLMALIHYSPRYTDHELKRLLKEAQRVFPHTILSRDQLMVPIAYRE</sequence>
<feature type="chain" id="PRO_0000155918" description="Ribonuclease Z">
    <location>
        <begin position="1"/>
        <end position="310"/>
    </location>
</feature>
<feature type="active site" description="Proton acceptor" evidence="1">
    <location>
        <position position="68"/>
    </location>
</feature>
<feature type="binding site" evidence="1">
    <location>
        <position position="64"/>
    </location>
    <ligand>
        <name>Zn(2+)</name>
        <dbReference type="ChEBI" id="CHEBI:29105"/>
        <label>1</label>
        <note>catalytic</note>
    </ligand>
</feature>
<feature type="binding site" evidence="1">
    <location>
        <position position="66"/>
    </location>
    <ligand>
        <name>Zn(2+)</name>
        <dbReference type="ChEBI" id="CHEBI:29105"/>
        <label>1</label>
        <note>catalytic</note>
    </ligand>
</feature>
<feature type="binding site" evidence="1">
    <location>
        <position position="68"/>
    </location>
    <ligand>
        <name>Zn(2+)</name>
        <dbReference type="ChEBI" id="CHEBI:29105"/>
        <label>2</label>
        <note>catalytic</note>
    </ligand>
</feature>
<feature type="binding site" evidence="1">
    <location>
        <position position="69"/>
    </location>
    <ligand>
        <name>Zn(2+)</name>
        <dbReference type="ChEBI" id="CHEBI:29105"/>
        <label>2</label>
        <note>catalytic</note>
    </ligand>
</feature>
<feature type="binding site" evidence="1">
    <location>
        <position position="142"/>
    </location>
    <ligand>
        <name>Zn(2+)</name>
        <dbReference type="ChEBI" id="CHEBI:29105"/>
        <label>1</label>
        <note>catalytic</note>
    </ligand>
</feature>
<feature type="binding site" evidence="1">
    <location>
        <position position="213"/>
    </location>
    <ligand>
        <name>Zn(2+)</name>
        <dbReference type="ChEBI" id="CHEBI:29105"/>
        <label>1</label>
        <note>catalytic</note>
    </ligand>
</feature>
<feature type="binding site" evidence="1">
    <location>
        <position position="213"/>
    </location>
    <ligand>
        <name>Zn(2+)</name>
        <dbReference type="ChEBI" id="CHEBI:29105"/>
        <label>2</label>
        <note>catalytic</note>
    </ligand>
</feature>
<feature type="binding site" evidence="1">
    <location>
        <position position="271"/>
    </location>
    <ligand>
        <name>Zn(2+)</name>
        <dbReference type="ChEBI" id="CHEBI:29105"/>
        <label>2</label>
        <note>catalytic</note>
    </ligand>
</feature>
<evidence type="ECO:0000255" key="1">
    <source>
        <dbReference type="HAMAP-Rule" id="MF_01818"/>
    </source>
</evidence>
<organism>
    <name type="scientific">Treponema pallidum (strain Nichols)</name>
    <dbReference type="NCBI Taxonomy" id="243276"/>
    <lineage>
        <taxon>Bacteria</taxon>
        <taxon>Pseudomonadati</taxon>
        <taxon>Spirochaetota</taxon>
        <taxon>Spirochaetia</taxon>
        <taxon>Spirochaetales</taxon>
        <taxon>Treponemataceae</taxon>
        <taxon>Treponema</taxon>
    </lineage>
</organism>
<proteinExistence type="inferred from homology"/>
<accession>O07896</accession>
<protein>
    <recommendedName>
        <fullName evidence="1">Ribonuclease Z</fullName>
        <shortName evidence="1">RNase Z</shortName>
        <ecNumber evidence="1">3.1.26.11</ecNumber>
    </recommendedName>
    <alternativeName>
        <fullName evidence="1">tRNA 3 endonuclease</fullName>
    </alternativeName>
    <alternativeName>
        <fullName evidence="1">tRNase Z</fullName>
    </alternativeName>
</protein>
<comment type="function">
    <text evidence="1">Zinc phosphodiesterase, which displays some tRNA 3'-processing endonuclease activity. Probably involved in tRNA maturation, by removing a 3'-trailer from precursor tRNA.</text>
</comment>
<comment type="catalytic activity">
    <reaction evidence="1">
        <text>Endonucleolytic cleavage of RNA, removing extra 3' nucleotides from tRNA precursor, generating 3' termini of tRNAs. A 3'-hydroxy group is left at the tRNA terminus and a 5'-phosphoryl group is left at the trailer molecule.</text>
        <dbReference type="EC" id="3.1.26.11"/>
    </reaction>
</comment>
<comment type="cofactor">
    <cofactor evidence="1">
        <name>Zn(2+)</name>
        <dbReference type="ChEBI" id="CHEBI:29105"/>
    </cofactor>
    <text evidence="1">Binds 2 Zn(2+) ions.</text>
</comment>
<comment type="subunit">
    <text evidence="1">Homodimer.</text>
</comment>
<comment type="similarity">
    <text evidence="1">Belongs to the RNase Z family.</text>
</comment>
<gene>
    <name evidence="1" type="primary">rnz</name>
    <name type="ordered locus">TP_0819</name>
</gene>
<reference key="1">
    <citation type="submission" date="1997-03" db="EMBL/GenBank/DDBJ databases">
        <authorList>
            <person name="Stamm L.V."/>
            <person name="Barnes N.Y."/>
        </authorList>
    </citation>
    <scope>NUCLEOTIDE SEQUENCE [GENOMIC DNA]</scope>
    <source>
        <strain>Nichols</strain>
    </source>
</reference>
<reference key="2">
    <citation type="journal article" date="1998" name="Science">
        <title>Complete genome sequence of Treponema pallidum, the syphilis spirochete.</title>
        <authorList>
            <person name="Fraser C.M."/>
            <person name="Norris S.J."/>
            <person name="Weinstock G.M."/>
            <person name="White O."/>
            <person name="Sutton G.G."/>
            <person name="Dodson R.J."/>
            <person name="Gwinn M.L."/>
            <person name="Hickey E.K."/>
            <person name="Clayton R.A."/>
            <person name="Ketchum K.A."/>
            <person name="Sodergren E."/>
            <person name="Hardham J.M."/>
            <person name="McLeod M.P."/>
            <person name="Salzberg S.L."/>
            <person name="Peterson J.D."/>
            <person name="Khalak H.G."/>
            <person name="Richardson D.L."/>
            <person name="Howell J.K."/>
            <person name="Chidambaram M."/>
            <person name="Utterback T.R."/>
            <person name="McDonald L.A."/>
            <person name="Artiach P."/>
            <person name="Bowman C."/>
            <person name="Cotton M.D."/>
            <person name="Fujii C."/>
            <person name="Garland S.A."/>
            <person name="Hatch B."/>
            <person name="Horst K."/>
            <person name="Roberts K.M."/>
            <person name="Sandusky M."/>
            <person name="Weidman J.F."/>
            <person name="Smith H.O."/>
            <person name="Venter J.C."/>
        </authorList>
    </citation>
    <scope>NUCLEOTIDE SEQUENCE [LARGE SCALE GENOMIC DNA]</scope>
    <source>
        <strain>Nichols</strain>
    </source>
</reference>
<keyword id="KW-0255">Endonuclease</keyword>
<keyword id="KW-0378">Hydrolase</keyword>
<keyword id="KW-0479">Metal-binding</keyword>
<keyword id="KW-0540">Nuclease</keyword>
<keyword id="KW-1185">Reference proteome</keyword>
<keyword id="KW-0819">tRNA processing</keyword>
<keyword id="KW-0862">Zinc</keyword>
<name>RNZ_TREPA</name>
<dbReference type="EC" id="3.1.26.11" evidence="1"/>
<dbReference type="EMBL" id="U93844">
    <property type="protein sequence ID" value="AAB61269.1"/>
    <property type="molecule type" value="Genomic_DNA"/>
</dbReference>
<dbReference type="EMBL" id="AE000520">
    <property type="protein sequence ID" value="AAC65782.1"/>
    <property type="molecule type" value="Genomic_DNA"/>
</dbReference>
<dbReference type="PIR" id="H71278">
    <property type="entry name" value="H71278"/>
</dbReference>
<dbReference type="SMR" id="O07896"/>
<dbReference type="IntAct" id="O07896">
    <property type="interactions" value="27"/>
</dbReference>
<dbReference type="STRING" id="243276.TP_0819"/>
<dbReference type="EnsemblBacteria" id="AAC65782">
    <property type="protein sequence ID" value="AAC65782"/>
    <property type="gene ID" value="TP_0819"/>
</dbReference>
<dbReference type="KEGG" id="tpa:TP_0819"/>
<dbReference type="KEGG" id="tpw:TPANIC_0819"/>
<dbReference type="eggNOG" id="COG1234">
    <property type="taxonomic scope" value="Bacteria"/>
</dbReference>
<dbReference type="HOGENOM" id="CLU_031317_2_1_12"/>
<dbReference type="Proteomes" id="UP000000811">
    <property type="component" value="Chromosome"/>
</dbReference>
<dbReference type="GO" id="GO:0042781">
    <property type="term" value="F:3'-tRNA processing endoribonuclease activity"/>
    <property type="evidence" value="ECO:0007669"/>
    <property type="project" value="UniProtKB-UniRule"/>
</dbReference>
<dbReference type="GO" id="GO:0008270">
    <property type="term" value="F:zinc ion binding"/>
    <property type="evidence" value="ECO:0007669"/>
    <property type="project" value="UniProtKB-UniRule"/>
</dbReference>
<dbReference type="CDD" id="cd07717">
    <property type="entry name" value="RNaseZ_ZiPD-like_MBL-fold"/>
    <property type="match status" value="1"/>
</dbReference>
<dbReference type="Gene3D" id="3.60.15.10">
    <property type="entry name" value="Ribonuclease Z/Hydroxyacylglutathione hydrolase-like"/>
    <property type="match status" value="1"/>
</dbReference>
<dbReference type="HAMAP" id="MF_01818">
    <property type="entry name" value="RNase_Z_BN"/>
    <property type="match status" value="1"/>
</dbReference>
<dbReference type="InterPro" id="IPR001279">
    <property type="entry name" value="Metallo-B-lactamas"/>
</dbReference>
<dbReference type="InterPro" id="IPR036866">
    <property type="entry name" value="RibonucZ/Hydroxyglut_hydro"/>
</dbReference>
<dbReference type="InterPro" id="IPR013471">
    <property type="entry name" value="RNase_Z/BN"/>
</dbReference>
<dbReference type="NCBIfam" id="NF000801">
    <property type="entry name" value="PRK00055.1-3"/>
    <property type="match status" value="1"/>
</dbReference>
<dbReference type="NCBIfam" id="TIGR02651">
    <property type="entry name" value="RNase_Z"/>
    <property type="match status" value="1"/>
</dbReference>
<dbReference type="PANTHER" id="PTHR46018">
    <property type="entry name" value="ZINC PHOSPHODIESTERASE ELAC PROTEIN 1"/>
    <property type="match status" value="1"/>
</dbReference>
<dbReference type="PANTHER" id="PTHR46018:SF2">
    <property type="entry name" value="ZINC PHOSPHODIESTERASE ELAC PROTEIN 1"/>
    <property type="match status" value="1"/>
</dbReference>
<dbReference type="Pfam" id="PF00753">
    <property type="entry name" value="Lactamase_B"/>
    <property type="match status" value="1"/>
</dbReference>
<dbReference type="Pfam" id="PF12706">
    <property type="entry name" value="Lactamase_B_2"/>
    <property type="match status" value="1"/>
</dbReference>
<dbReference type="SMART" id="SM00849">
    <property type="entry name" value="Lactamase_B"/>
    <property type="match status" value="1"/>
</dbReference>
<dbReference type="SUPFAM" id="SSF56281">
    <property type="entry name" value="Metallo-hydrolase/oxidoreductase"/>
    <property type="match status" value="1"/>
</dbReference>